<feature type="chain" id="PRO_1000011909" description="Diaminopimelate epimerase">
    <location>
        <begin position="1"/>
        <end position="291"/>
    </location>
</feature>
<feature type="active site" description="Proton donor" evidence="1">
    <location>
        <position position="87"/>
    </location>
</feature>
<feature type="active site" description="Proton acceptor" evidence="1">
    <location>
        <position position="227"/>
    </location>
</feature>
<feature type="binding site" evidence="1">
    <location>
        <position position="11"/>
    </location>
    <ligand>
        <name>substrate</name>
    </ligand>
</feature>
<feature type="binding site" evidence="1">
    <location>
        <position position="78"/>
    </location>
    <ligand>
        <name>substrate</name>
    </ligand>
</feature>
<feature type="binding site" evidence="1">
    <location>
        <begin position="88"/>
        <end position="89"/>
    </location>
    <ligand>
        <name>substrate</name>
    </ligand>
</feature>
<feature type="binding site" evidence="1">
    <location>
        <position position="166"/>
    </location>
    <ligand>
        <name>substrate</name>
    </ligand>
</feature>
<feature type="binding site" evidence="1">
    <location>
        <position position="200"/>
    </location>
    <ligand>
        <name>substrate</name>
    </ligand>
</feature>
<feature type="binding site" evidence="1">
    <location>
        <begin position="218"/>
        <end position="219"/>
    </location>
    <ligand>
        <name>substrate</name>
    </ligand>
</feature>
<feature type="binding site" evidence="1">
    <location>
        <begin position="228"/>
        <end position="229"/>
    </location>
    <ligand>
        <name>substrate</name>
    </ligand>
</feature>
<feature type="site" description="Could be important to modulate the pK values of the two catalytic cysteine residues" evidence="1">
    <location>
        <position position="168"/>
    </location>
</feature>
<feature type="site" description="Could be important to modulate the pK values of the two catalytic cysteine residues" evidence="1">
    <location>
        <position position="218"/>
    </location>
</feature>
<gene>
    <name evidence="1" type="primary">dapF</name>
    <name type="ordered locus">MSMEG_2735</name>
    <name type="ordered locus">MSMEI_2668</name>
</gene>
<proteinExistence type="inferred from homology"/>
<accession>A0QVY0</accession>
<accession>I7G799</accession>
<dbReference type="EC" id="5.1.1.7" evidence="1"/>
<dbReference type="EMBL" id="CP000480">
    <property type="protein sequence ID" value="ABK73529.1"/>
    <property type="molecule type" value="Genomic_DNA"/>
</dbReference>
<dbReference type="EMBL" id="CP001663">
    <property type="protein sequence ID" value="AFP39136.1"/>
    <property type="molecule type" value="Genomic_DNA"/>
</dbReference>
<dbReference type="RefSeq" id="WP_011728551.1">
    <property type="nucleotide sequence ID" value="NZ_SIJM01000032.1"/>
</dbReference>
<dbReference type="RefSeq" id="YP_887068.1">
    <property type="nucleotide sequence ID" value="NC_008596.1"/>
</dbReference>
<dbReference type="SMR" id="A0QVY0"/>
<dbReference type="STRING" id="246196.MSMEG_2735"/>
<dbReference type="PaxDb" id="246196-MSMEI_2668"/>
<dbReference type="GeneID" id="93457518"/>
<dbReference type="KEGG" id="msb:LJ00_13600"/>
<dbReference type="KEGG" id="msg:MSMEI_2668"/>
<dbReference type="KEGG" id="msm:MSMEG_2735"/>
<dbReference type="PATRIC" id="fig|246196.19.peg.2703"/>
<dbReference type="eggNOG" id="COG0253">
    <property type="taxonomic scope" value="Bacteria"/>
</dbReference>
<dbReference type="OrthoDB" id="9805408at2"/>
<dbReference type="UniPathway" id="UPA00034">
    <property type="reaction ID" value="UER00025"/>
</dbReference>
<dbReference type="Proteomes" id="UP000000757">
    <property type="component" value="Chromosome"/>
</dbReference>
<dbReference type="Proteomes" id="UP000006158">
    <property type="component" value="Chromosome"/>
</dbReference>
<dbReference type="GO" id="GO:0005829">
    <property type="term" value="C:cytosol"/>
    <property type="evidence" value="ECO:0007669"/>
    <property type="project" value="TreeGrafter"/>
</dbReference>
<dbReference type="GO" id="GO:0008837">
    <property type="term" value="F:diaminopimelate epimerase activity"/>
    <property type="evidence" value="ECO:0007669"/>
    <property type="project" value="UniProtKB-UniRule"/>
</dbReference>
<dbReference type="GO" id="GO:0009089">
    <property type="term" value="P:lysine biosynthetic process via diaminopimelate"/>
    <property type="evidence" value="ECO:0007669"/>
    <property type="project" value="UniProtKB-UniRule"/>
</dbReference>
<dbReference type="Gene3D" id="3.10.310.10">
    <property type="entry name" value="Diaminopimelate Epimerase, Chain A, domain 1"/>
    <property type="match status" value="2"/>
</dbReference>
<dbReference type="HAMAP" id="MF_00197">
    <property type="entry name" value="DAP_epimerase"/>
    <property type="match status" value="1"/>
</dbReference>
<dbReference type="InterPro" id="IPR018510">
    <property type="entry name" value="DAP_epimerase_AS"/>
</dbReference>
<dbReference type="InterPro" id="IPR001653">
    <property type="entry name" value="DAP_epimerase_DapF"/>
</dbReference>
<dbReference type="NCBIfam" id="TIGR00652">
    <property type="entry name" value="DapF"/>
    <property type="match status" value="1"/>
</dbReference>
<dbReference type="PANTHER" id="PTHR31689:SF0">
    <property type="entry name" value="DIAMINOPIMELATE EPIMERASE"/>
    <property type="match status" value="1"/>
</dbReference>
<dbReference type="PANTHER" id="PTHR31689">
    <property type="entry name" value="DIAMINOPIMELATE EPIMERASE, CHLOROPLASTIC"/>
    <property type="match status" value="1"/>
</dbReference>
<dbReference type="Pfam" id="PF01678">
    <property type="entry name" value="DAP_epimerase"/>
    <property type="match status" value="2"/>
</dbReference>
<dbReference type="SUPFAM" id="SSF54506">
    <property type="entry name" value="Diaminopimelate epimerase-like"/>
    <property type="match status" value="2"/>
</dbReference>
<dbReference type="PROSITE" id="PS01326">
    <property type="entry name" value="DAP_EPIMERASE"/>
    <property type="match status" value="1"/>
</dbReference>
<keyword id="KW-0028">Amino-acid biosynthesis</keyword>
<keyword id="KW-0963">Cytoplasm</keyword>
<keyword id="KW-0413">Isomerase</keyword>
<keyword id="KW-0457">Lysine biosynthesis</keyword>
<keyword id="KW-1185">Reference proteome</keyword>
<evidence type="ECO:0000255" key="1">
    <source>
        <dbReference type="HAMAP-Rule" id="MF_00197"/>
    </source>
</evidence>
<protein>
    <recommendedName>
        <fullName evidence="1">Diaminopimelate epimerase</fullName>
        <shortName evidence="1">DAP epimerase</shortName>
        <ecNumber evidence="1">5.1.1.7</ecNumber>
    </recommendedName>
    <alternativeName>
        <fullName evidence="1">PLP-independent amino acid racemase</fullName>
    </alternativeName>
</protein>
<comment type="function">
    <text evidence="1">Catalyzes the stereoinversion of LL-2,6-diaminopimelate (L,L-DAP) to meso-diaminopimelate (meso-DAP), a precursor of L-lysine and an essential component of the bacterial peptidoglycan.</text>
</comment>
<comment type="catalytic activity">
    <reaction evidence="1">
        <text>(2S,6S)-2,6-diaminopimelate = meso-2,6-diaminopimelate</text>
        <dbReference type="Rhea" id="RHEA:15393"/>
        <dbReference type="ChEBI" id="CHEBI:57609"/>
        <dbReference type="ChEBI" id="CHEBI:57791"/>
        <dbReference type="EC" id="5.1.1.7"/>
    </reaction>
</comment>
<comment type="pathway">
    <text evidence="1">Amino-acid biosynthesis; L-lysine biosynthesis via DAP pathway; DL-2,6-diaminopimelate from LL-2,6-diaminopimelate: step 1/1.</text>
</comment>
<comment type="subunit">
    <text evidence="1">Homodimer.</text>
</comment>
<comment type="subcellular location">
    <subcellularLocation>
        <location evidence="1">Cytoplasm</location>
    </subcellularLocation>
</comment>
<comment type="similarity">
    <text evidence="1">Belongs to the diaminopimelate epimerase family.</text>
</comment>
<organism>
    <name type="scientific">Mycolicibacterium smegmatis (strain ATCC 700084 / mc(2)155)</name>
    <name type="common">Mycobacterium smegmatis</name>
    <dbReference type="NCBI Taxonomy" id="246196"/>
    <lineage>
        <taxon>Bacteria</taxon>
        <taxon>Bacillati</taxon>
        <taxon>Actinomycetota</taxon>
        <taxon>Actinomycetes</taxon>
        <taxon>Mycobacteriales</taxon>
        <taxon>Mycobacteriaceae</taxon>
        <taxon>Mycolicibacterium</taxon>
    </lineage>
</organism>
<reference key="1">
    <citation type="submission" date="2006-10" db="EMBL/GenBank/DDBJ databases">
        <authorList>
            <person name="Fleischmann R.D."/>
            <person name="Dodson R.J."/>
            <person name="Haft D.H."/>
            <person name="Merkel J.S."/>
            <person name="Nelson W.C."/>
            <person name="Fraser C.M."/>
        </authorList>
    </citation>
    <scope>NUCLEOTIDE SEQUENCE [LARGE SCALE GENOMIC DNA]</scope>
    <source>
        <strain>ATCC 700084 / mc(2)155</strain>
    </source>
</reference>
<reference key="2">
    <citation type="journal article" date="2007" name="Genome Biol.">
        <title>Interrupted coding sequences in Mycobacterium smegmatis: authentic mutations or sequencing errors?</title>
        <authorList>
            <person name="Deshayes C."/>
            <person name="Perrodou E."/>
            <person name="Gallien S."/>
            <person name="Euphrasie D."/>
            <person name="Schaeffer C."/>
            <person name="Van-Dorsselaer A."/>
            <person name="Poch O."/>
            <person name="Lecompte O."/>
            <person name="Reyrat J.-M."/>
        </authorList>
    </citation>
    <scope>NUCLEOTIDE SEQUENCE [LARGE SCALE GENOMIC DNA]</scope>
    <source>
        <strain>ATCC 700084 / mc(2)155</strain>
    </source>
</reference>
<reference key="3">
    <citation type="journal article" date="2009" name="Genome Res.">
        <title>Ortho-proteogenomics: multiple proteomes investigation through orthology and a new MS-based protocol.</title>
        <authorList>
            <person name="Gallien S."/>
            <person name="Perrodou E."/>
            <person name="Carapito C."/>
            <person name="Deshayes C."/>
            <person name="Reyrat J.-M."/>
            <person name="Van Dorsselaer A."/>
            <person name="Poch O."/>
            <person name="Schaeffer C."/>
            <person name="Lecompte O."/>
        </authorList>
    </citation>
    <scope>NUCLEOTIDE SEQUENCE [LARGE SCALE GENOMIC DNA]</scope>
    <source>
        <strain>ATCC 700084 / mc(2)155</strain>
    </source>
</reference>
<sequence>MIFAKGHGTENDFVVLPDLDAALSLTPSAVAALCDRRRGLGADGVLRVTRAGAARAAGVFDRLPDGVSAGDWYMDYRNADGSIAQMCGNGVRVFAHYLRASGLESADEFVVGSLAGPRPVVLHGFDPARATTAEVTVEMGKANQFGAGSAVVGGRSFDGLAVDVGNPHLACVGITADDLAALDVAAPVSFDPALFPDGVNVEVLTASVDGAVSMRVHERGVGETRSCGTGTVAATVAALAHDGADTGTLRVRIPGGEVTVTVTESTSYLRGPSVLVARGELDPHWWHAVAG</sequence>
<name>DAPF_MYCS2</name>